<protein>
    <recommendedName>
        <fullName evidence="1">3-keto-L-gulonate-6-phosphate decarboxylase UlaD</fullName>
        <ecNumber evidence="1">4.1.1.85</ecNumber>
    </recommendedName>
    <alternativeName>
        <fullName evidence="1">3-dehydro-L-gulonate-6-phosphate decarboxylase</fullName>
    </alternativeName>
    <alternativeName>
        <fullName evidence="1">KGPDC</fullName>
    </alternativeName>
    <alternativeName>
        <fullName evidence="1">L-ascorbate utilization protein D</fullName>
    </alternativeName>
</protein>
<name>ULAD_ECOL6</name>
<dbReference type="EC" id="4.1.1.85" evidence="1"/>
<dbReference type="EMBL" id="AE014075">
    <property type="protein sequence ID" value="AAN83706.1"/>
    <property type="status" value="ALT_INIT"/>
    <property type="molecule type" value="Genomic_DNA"/>
</dbReference>
<dbReference type="RefSeq" id="WP_000056760.1">
    <property type="nucleotide sequence ID" value="NZ_CP051263.1"/>
</dbReference>
<dbReference type="SMR" id="Q8FAI9"/>
<dbReference type="STRING" id="199310.c5285"/>
<dbReference type="GeneID" id="75202430"/>
<dbReference type="KEGG" id="ecc:c5285"/>
<dbReference type="eggNOG" id="COG0269">
    <property type="taxonomic scope" value="Bacteria"/>
</dbReference>
<dbReference type="HOGENOM" id="CLU_081825_0_0_6"/>
<dbReference type="UniPathway" id="UPA00263">
    <property type="reaction ID" value="UER00378"/>
</dbReference>
<dbReference type="Proteomes" id="UP000001410">
    <property type="component" value="Chromosome"/>
</dbReference>
<dbReference type="GO" id="GO:0033982">
    <property type="term" value="F:3-dehydro-L-gulonate-6-phosphate decarboxylase activity"/>
    <property type="evidence" value="ECO:0007669"/>
    <property type="project" value="UniProtKB-EC"/>
</dbReference>
<dbReference type="GO" id="GO:0000287">
    <property type="term" value="F:magnesium ion binding"/>
    <property type="evidence" value="ECO:0007669"/>
    <property type="project" value="UniProtKB-UniRule"/>
</dbReference>
<dbReference type="GO" id="GO:0004590">
    <property type="term" value="F:orotidine-5'-phosphate decarboxylase activity"/>
    <property type="evidence" value="ECO:0007669"/>
    <property type="project" value="InterPro"/>
</dbReference>
<dbReference type="GO" id="GO:0006207">
    <property type="term" value="P:'de novo' pyrimidine nucleobase biosynthetic process"/>
    <property type="evidence" value="ECO:0007669"/>
    <property type="project" value="InterPro"/>
</dbReference>
<dbReference type="GO" id="GO:0019854">
    <property type="term" value="P:L-ascorbic acid catabolic process"/>
    <property type="evidence" value="ECO:0007669"/>
    <property type="project" value="UniProtKB-UniRule"/>
</dbReference>
<dbReference type="CDD" id="cd04726">
    <property type="entry name" value="KGPDC_HPS"/>
    <property type="match status" value="1"/>
</dbReference>
<dbReference type="FunFam" id="3.20.20.70:FF:000022">
    <property type="entry name" value="3-keto-L-gulonate-6-phosphate decarboxylase UlaD"/>
    <property type="match status" value="1"/>
</dbReference>
<dbReference type="Gene3D" id="3.20.20.70">
    <property type="entry name" value="Aldolase class I"/>
    <property type="match status" value="1"/>
</dbReference>
<dbReference type="HAMAP" id="MF_01267">
    <property type="entry name" value="UlaD"/>
    <property type="match status" value="1"/>
</dbReference>
<dbReference type="InterPro" id="IPR023942">
    <property type="entry name" value="3-keto-L-gulonate6Pdecase_UlaD"/>
</dbReference>
<dbReference type="InterPro" id="IPR013785">
    <property type="entry name" value="Aldolase_TIM"/>
</dbReference>
<dbReference type="InterPro" id="IPR041710">
    <property type="entry name" value="HPS/KGPDC"/>
</dbReference>
<dbReference type="InterPro" id="IPR001754">
    <property type="entry name" value="OMPdeCOase_dom"/>
</dbReference>
<dbReference type="InterPro" id="IPR011060">
    <property type="entry name" value="RibuloseP-bd_barrel"/>
</dbReference>
<dbReference type="NCBIfam" id="NF009832">
    <property type="entry name" value="PRK13306.1"/>
    <property type="match status" value="1"/>
</dbReference>
<dbReference type="PANTHER" id="PTHR35039">
    <property type="entry name" value="3-KETO-L-GULONATE-6-PHOSPHATE DECARBOXYLASE SGBH-RELATED"/>
    <property type="match status" value="1"/>
</dbReference>
<dbReference type="PANTHER" id="PTHR35039:SF3">
    <property type="entry name" value="3-KETO-L-GULONATE-6-PHOSPHATE DECARBOXYLASE SGBH-RELATED"/>
    <property type="match status" value="1"/>
</dbReference>
<dbReference type="Pfam" id="PF00215">
    <property type="entry name" value="OMPdecase"/>
    <property type="match status" value="1"/>
</dbReference>
<dbReference type="SMART" id="SM00934">
    <property type="entry name" value="OMPdecase"/>
    <property type="match status" value="1"/>
</dbReference>
<dbReference type="SUPFAM" id="SSF51366">
    <property type="entry name" value="Ribulose-phoshate binding barrel"/>
    <property type="match status" value="1"/>
</dbReference>
<comment type="function">
    <text evidence="1">Catalyzes the decarboxylation of 3-keto-L-gulonate-6-P into L-xylulose-5-P. Is involved in the anaerobic L-ascorbate utilization.</text>
</comment>
<comment type="catalytic activity">
    <reaction evidence="1">
        <text>3-dehydro-L-gulonate 6-phosphate + H(+) = L-xylulose 5-phosphate + CO2</text>
        <dbReference type="Rhea" id="RHEA:14353"/>
        <dbReference type="ChEBI" id="CHEBI:15378"/>
        <dbReference type="ChEBI" id="CHEBI:16526"/>
        <dbReference type="ChEBI" id="CHEBI:57829"/>
        <dbReference type="ChEBI" id="CHEBI:58774"/>
        <dbReference type="EC" id="4.1.1.85"/>
    </reaction>
</comment>
<comment type="cofactor">
    <cofactor evidence="1">
        <name>Mg(2+)</name>
        <dbReference type="ChEBI" id="CHEBI:18420"/>
    </cofactor>
    <text evidence="1">Binds 1 Mg(2+) ion per subunit.</text>
</comment>
<comment type="pathway">
    <text evidence="1">Cofactor degradation; L-ascorbate degradation; D-xylulose 5-phosphate from L-ascorbate: step 2/4.</text>
</comment>
<comment type="subunit">
    <text evidence="1">Homodimer.</text>
</comment>
<comment type="induction">
    <text evidence="1">Induced by L-ascorbate. Repressed by UlaR.</text>
</comment>
<comment type="similarity">
    <text evidence="1">Belongs to the HPS/KGPDC family. KGPDC subfamily.</text>
</comment>
<comment type="sequence caution" evidence="2">
    <conflict type="erroneous initiation">
        <sequence resource="EMBL-CDS" id="AAN83706"/>
    </conflict>
</comment>
<gene>
    <name evidence="1" type="primary">ulaD</name>
    <name type="ordered locus">c5285</name>
</gene>
<accession>Q8FAI9</accession>
<reference key="1">
    <citation type="journal article" date="2002" name="Proc. Natl. Acad. Sci. U.S.A.">
        <title>Extensive mosaic structure revealed by the complete genome sequence of uropathogenic Escherichia coli.</title>
        <authorList>
            <person name="Welch R.A."/>
            <person name="Burland V."/>
            <person name="Plunkett G. III"/>
            <person name="Redford P."/>
            <person name="Roesch P."/>
            <person name="Rasko D."/>
            <person name="Buckles E.L."/>
            <person name="Liou S.-R."/>
            <person name="Boutin A."/>
            <person name="Hackett J."/>
            <person name="Stroud D."/>
            <person name="Mayhew G.F."/>
            <person name="Rose D.J."/>
            <person name="Zhou S."/>
            <person name="Schwartz D.C."/>
            <person name="Perna N.T."/>
            <person name="Mobley H.L.T."/>
            <person name="Donnenberg M.S."/>
            <person name="Blattner F.R."/>
        </authorList>
    </citation>
    <scope>NUCLEOTIDE SEQUENCE [LARGE SCALE GENOMIC DNA]</scope>
    <source>
        <strain>CFT073 / ATCC 700928 / UPEC</strain>
    </source>
</reference>
<evidence type="ECO:0000255" key="1">
    <source>
        <dbReference type="HAMAP-Rule" id="MF_01267"/>
    </source>
</evidence>
<evidence type="ECO:0000305" key="2"/>
<sequence length="216" mass="23649">MSLPMLQVALDNQTMDSAYETTRLIAEEVDIIEVGTILCVGEGVRAVRDLKALYPHKIVLADAKIADAGKILSRMCFEANADWVTVICCADINTAKGALDVAKEFNGDVQIELTGYWTWEQAQQWRDAGIQQVVYHRSRDAQAAGVAWGEADITAIKRLSDMGFKVTVTGGLALEDLPLFKGIPIHVFIAGRSIRDAASPVEAARQFKRSIAELWG</sequence>
<feature type="chain" id="PRO_0000236090" description="3-keto-L-gulonate-6-phosphate decarboxylase UlaD">
    <location>
        <begin position="1"/>
        <end position="216"/>
    </location>
</feature>
<feature type="binding site" evidence="1">
    <location>
        <position position="11"/>
    </location>
    <ligand>
        <name>substrate</name>
    </ligand>
</feature>
<feature type="binding site" evidence="1">
    <location>
        <position position="33"/>
    </location>
    <ligand>
        <name>Mg(2+)</name>
        <dbReference type="ChEBI" id="CHEBI:18420"/>
    </ligand>
</feature>
<feature type="binding site" evidence="1">
    <location>
        <position position="62"/>
    </location>
    <ligand>
        <name>Mg(2+)</name>
        <dbReference type="ChEBI" id="CHEBI:18420"/>
    </ligand>
</feature>
<feature type="binding site" evidence="1">
    <location>
        <position position="192"/>
    </location>
    <ligand>
        <name>substrate</name>
    </ligand>
</feature>
<feature type="site" description="Transition state stabilizer" evidence="1">
    <location>
        <position position="64"/>
    </location>
</feature>
<feature type="site" description="Transition state stabilizer" evidence="1">
    <location>
        <position position="67"/>
    </location>
</feature>
<keyword id="KW-0119">Carbohydrate metabolism</keyword>
<keyword id="KW-0210">Decarboxylase</keyword>
<keyword id="KW-0456">Lyase</keyword>
<keyword id="KW-0460">Magnesium</keyword>
<keyword id="KW-0479">Metal-binding</keyword>
<keyword id="KW-1185">Reference proteome</keyword>
<organism>
    <name type="scientific">Escherichia coli O6:H1 (strain CFT073 / ATCC 700928 / UPEC)</name>
    <dbReference type="NCBI Taxonomy" id="199310"/>
    <lineage>
        <taxon>Bacteria</taxon>
        <taxon>Pseudomonadati</taxon>
        <taxon>Pseudomonadota</taxon>
        <taxon>Gammaproteobacteria</taxon>
        <taxon>Enterobacterales</taxon>
        <taxon>Enterobacteriaceae</taxon>
        <taxon>Escherichia</taxon>
    </lineage>
</organism>
<proteinExistence type="inferred from homology"/>